<name>SYK_BUCCC</name>
<feature type="chain" id="PRO_1000125514" description="Lysine--tRNA ligase">
    <location>
        <begin position="1"/>
        <end position="502"/>
    </location>
</feature>
<feature type="binding site" evidence="1">
    <location>
        <position position="412"/>
    </location>
    <ligand>
        <name>Mg(2+)</name>
        <dbReference type="ChEBI" id="CHEBI:18420"/>
        <label>1</label>
    </ligand>
</feature>
<feature type="binding site" evidence="1">
    <location>
        <position position="419"/>
    </location>
    <ligand>
        <name>Mg(2+)</name>
        <dbReference type="ChEBI" id="CHEBI:18420"/>
        <label>1</label>
    </ligand>
</feature>
<feature type="binding site" evidence="1">
    <location>
        <position position="419"/>
    </location>
    <ligand>
        <name>Mg(2+)</name>
        <dbReference type="ChEBI" id="CHEBI:18420"/>
        <label>2</label>
    </ligand>
</feature>
<reference key="1">
    <citation type="journal article" date="2006" name="Science">
        <title>A small microbial genome: the end of a long symbiotic relationship?</title>
        <authorList>
            <person name="Perez-Brocal V."/>
            <person name="Gil R."/>
            <person name="Ramos S."/>
            <person name="Lamelas A."/>
            <person name="Postigo M."/>
            <person name="Michelena J.M."/>
            <person name="Silva F.J."/>
            <person name="Moya A."/>
            <person name="Latorre A."/>
        </authorList>
    </citation>
    <scope>NUCLEOTIDE SEQUENCE [LARGE SCALE GENOMIC DNA]</scope>
    <source>
        <strain>Cc</strain>
    </source>
</reference>
<comment type="catalytic activity">
    <reaction evidence="1">
        <text>tRNA(Lys) + L-lysine + ATP = L-lysyl-tRNA(Lys) + AMP + diphosphate</text>
        <dbReference type="Rhea" id="RHEA:20792"/>
        <dbReference type="Rhea" id="RHEA-COMP:9696"/>
        <dbReference type="Rhea" id="RHEA-COMP:9697"/>
        <dbReference type="ChEBI" id="CHEBI:30616"/>
        <dbReference type="ChEBI" id="CHEBI:32551"/>
        <dbReference type="ChEBI" id="CHEBI:33019"/>
        <dbReference type="ChEBI" id="CHEBI:78442"/>
        <dbReference type="ChEBI" id="CHEBI:78529"/>
        <dbReference type="ChEBI" id="CHEBI:456215"/>
        <dbReference type="EC" id="6.1.1.6"/>
    </reaction>
</comment>
<comment type="cofactor">
    <cofactor evidence="1">
        <name>Mg(2+)</name>
        <dbReference type="ChEBI" id="CHEBI:18420"/>
    </cofactor>
    <text evidence="1">Binds 3 Mg(2+) ions per subunit.</text>
</comment>
<comment type="subunit">
    <text evidence="1">Homodimer.</text>
</comment>
<comment type="subcellular location">
    <subcellularLocation>
        <location evidence="1">Cytoplasm</location>
    </subcellularLocation>
</comment>
<comment type="similarity">
    <text evidence="1">Belongs to the class-II aminoacyl-tRNA synthetase family.</text>
</comment>
<evidence type="ECO:0000255" key="1">
    <source>
        <dbReference type="HAMAP-Rule" id="MF_00252"/>
    </source>
</evidence>
<sequence>MSKTLKIIQKKKSLEKELYTRKKKLKKLKKLGFNFPNTFHYIHTIKEIKKLYNNYTKKELEKINYKTKISGRIVNKRTFGKALFFVIRNNNHDIQIYIKSNYFPKNYYQKNILELDLGDIIGVKGKIFKTNTCELSILCKKIYLLTKSLRSLPDKYFGLKNQEIKYRKRYLDLISNNKIIKIFQKRSLIISNIRSFMKQKKFLEVETPMLHPIPGGANAKPFITYHNSLNEKMYLRIAPELYLKKLIIGGFNKIFEINRNFRNEGISTKHNPEFTMMEIYMSYSNYIDIMNLLEELCIFLVKKISKSLIIMYKSKKINFKKPIKKMTMIESILKFNKNIDISNFKNIKNIKKTATNLNIKIDSNASLGEITNLIFEKTTEKKIIQPTFITEYPIEISPLAKEKNKYFAERFEFFIAGYEIANGFSELNDPEEQKKRFKLQISKKNYTDKSKNFSYDKDYIIALEHGLPPTSGLGVGIDRLIMILTNQKTIKDIIFFPLLKKI</sequence>
<accession>Q057G7</accession>
<proteinExistence type="inferred from homology"/>
<protein>
    <recommendedName>
        <fullName evidence="1">Lysine--tRNA ligase</fullName>
        <ecNumber evidence="1">6.1.1.6</ecNumber>
    </recommendedName>
    <alternativeName>
        <fullName evidence="1">Lysyl-tRNA synthetase</fullName>
        <shortName evidence="1">LysRS</shortName>
    </alternativeName>
</protein>
<organism>
    <name type="scientific">Buchnera aphidicola subsp. Cinara cedri (strain Cc)</name>
    <dbReference type="NCBI Taxonomy" id="372461"/>
    <lineage>
        <taxon>Bacteria</taxon>
        <taxon>Pseudomonadati</taxon>
        <taxon>Pseudomonadota</taxon>
        <taxon>Gammaproteobacteria</taxon>
        <taxon>Enterobacterales</taxon>
        <taxon>Erwiniaceae</taxon>
        <taxon>Buchnera</taxon>
    </lineage>
</organism>
<gene>
    <name evidence="1" type="primary">lysS</name>
    <name type="ordered locus">BCc_270</name>
</gene>
<keyword id="KW-0030">Aminoacyl-tRNA synthetase</keyword>
<keyword id="KW-0067">ATP-binding</keyword>
<keyword id="KW-0963">Cytoplasm</keyword>
<keyword id="KW-0436">Ligase</keyword>
<keyword id="KW-0460">Magnesium</keyword>
<keyword id="KW-0479">Metal-binding</keyword>
<keyword id="KW-0547">Nucleotide-binding</keyword>
<keyword id="KW-0648">Protein biosynthesis</keyword>
<keyword id="KW-1185">Reference proteome</keyword>
<dbReference type="EC" id="6.1.1.6" evidence="1"/>
<dbReference type="EMBL" id="CP000263">
    <property type="protein sequence ID" value="ABJ90732.1"/>
    <property type="molecule type" value="Genomic_DNA"/>
</dbReference>
<dbReference type="RefSeq" id="WP_011672651.1">
    <property type="nucleotide sequence ID" value="NC_008513.1"/>
</dbReference>
<dbReference type="SMR" id="Q057G7"/>
<dbReference type="STRING" id="372461.BCc_270"/>
<dbReference type="KEGG" id="bcc:BCc_270"/>
<dbReference type="eggNOG" id="COG1190">
    <property type="taxonomic scope" value="Bacteria"/>
</dbReference>
<dbReference type="HOGENOM" id="CLU_008255_6_2_6"/>
<dbReference type="OrthoDB" id="9762036at2"/>
<dbReference type="Proteomes" id="UP000000669">
    <property type="component" value="Chromosome"/>
</dbReference>
<dbReference type="GO" id="GO:0005829">
    <property type="term" value="C:cytosol"/>
    <property type="evidence" value="ECO:0007669"/>
    <property type="project" value="TreeGrafter"/>
</dbReference>
<dbReference type="GO" id="GO:0005524">
    <property type="term" value="F:ATP binding"/>
    <property type="evidence" value="ECO:0007669"/>
    <property type="project" value="UniProtKB-UniRule"/>
</dbReference>
<dbReference type="GO" id="GO:0004824">
    <property type="term" value="F:lysine-tRNA ligase activity"/>
    <property type="evidence" value="ECO:0007669"/>
    <property type="project" value="UniProtKB-UniRule"/>
</dbReference>
<dbReference type="GO" id="GO:0000287">
    <property type="term" value="F:magnesium ion binding"/>
    <property type="evidence" value="ECO:0007669"/>
    <property type="project" value="UniProtKB-UniRule"/>
</dbReference>
<dbReference type="GO" id="GO:0000049">
    <property type="term" value="F:tRNA binding"/>
    <property type="evidence" value="ECO:0007669"/>
    <property type="project" value="TreeGrafter"/>
</dbReference>
<dbReference type="GO" id="GO:0006430">
    <property type="term" value="P:lysyl-tRNA aminoacylation"/>
    <property type="evidence" value="ECO:0007669"/>
    <property type="project" value="UniProtKB-UniRule"/>
</dbReference>
<dbReference type="CDD" id="cd00775">
    <property type="entry name" value="LysRS_core"/>
    <property type="match status" value="1"/>
</dbReference>
<dbReference type="CDD" id="cd04322">
    <property type="entry name" value="LysRS_N"/>
    <property type="match status" value="1"/>
</dbReference>
<dbReference type="FunFam" id="2.40.50.140:FF:000024">
    <property type="entry name" value="Lysine--tRNA ligase"/>
    <property type="match status" value="1"/>
</dbReference>
<dbReference type="Gene3D" id="3.30.930.10">
    <property type="entry name" value="Bira Bifunctional Protein, Domain 2"/>
    <property type="match status" value="1"/>
</dbReference>
<dbReference type="Gene3D" id="2.40.50.140">
    <property type="entry name" value="Nucleic acid-binding proteins"/>
    <property type="match status" value="1"/>
</dbReference>
<dbReference type="HAMAP" id="MF_00252">
    <property type="entry name" value="Lys_tRNA_synth_class2"/>
    <property type="match status" value="1"/>
</dbReference>
<dbReference type="InterPro" id="IPR004364">
    <property type="entry name" value="Aa-tRNA-synt_II"/>
</dbReference>
<dbReference type="InterPro" id="IPR006195">
    <property type="entry name" value="aa-tRNA-synth_II"/>
</dbReference>
<dbReference type="InterPro" id="IPR045864">
    <property type="entry name" value="aa-tRNA-synth_II/BPL/LPL"/>
</dbReference>
<dbReference type="InterPro" id="IPR002313">
    <property type="entry name" value="Lys-tRNA-ligase_II"/>
</dbReference>
<dbReference type="InterPro" id="IPR044136">
    <property type="entry name" value="Lys-tRNA-ligase_II_N"/>
</dbReference>
<dbReference type="InterPro" id="IPR018149">
    <property type="entry name" value="Lys-tRNA-synth_II_C"/>
</dbReference>
<dbReference type="InterPro" id="IPR012340">
    <property type="entry name" value="NA-bd_OB-fold"/>
</dbReference>
<dbReference type="InterPro" id="IPR004365">
    <property type="entry name" value="NA-bd_OB_tRNA"/>
</dbReference>
<dbReference type="NCBIfam" id="TIGR00499">
    <property type="entry name" value="lysS_bact"/>
    <property type="match status" value="1"/>
</dbReference>
<dbReference type="NCBIfam" id="NF001756">
    <property type="entry name" value="PRK00484.1"/>
    <property type="match status" value="1"/>
</dbReference>
<dbReference type="PANTHER" id="PTHR42918:SF15">
    <property type="entry name" value="LYSINE--TRNA LIGASE, CHLOROPLASTIC_MITOCHONDRIAL"/>
    <property type="match status" value="1"/>
</dbReference>
<dbReference type="PANTHER" id="PTHR42918">
    <property type="entry name" value="LYSYL-TRNA SYNTHETASE"/>
    <property type="match status" value="1"/>
</dbReference>
<dbReference type="Pfam" id="PF00152">
    <property type="entry name" value="tRNA-synt_2"/>
    <property type="match status" value="1"/>
</dbReference>
<dbReference type="Pfam" id="PF01336">
    <property type="entry name" value="tRNA_anti-codon"/>
    <property type="match status" value="1"/>
</dbReference>
<dbReference type="PRINTS" id="PR00982">
    <property type="entry name" value="TRNASYNTHLYS"/>
</dbReference>
<dbReference type="SUPFAM" id="SSF55681">
    <property type="entry name" value="Class II aaRS and biotin synthetases"/>
    <property type="match status" value="1"/>
</dbReference>
<dbReference type="SUPFAM" id="SSF50249">
    <property type="entry name" value="Nucleic acid-binding proteins"/>
    <property type="match status" value="1"/>
</dbReference>
<dbReference type="PROSITE" id="PS50862">
    <property type="entry name" value="AA_TRNA_LIGASE_II"/>
    <property type="match status" value="1"/>
</dbReference>